<name>PLSY_MARMM</name>
<evidence type="ECO:0000255" key="1">
    <source>
        <dbReference type="HAMAP-Rule" id="MF_01043"/>
    </source>
</evidence>
<evidence type="ECO:0000256" key="2">
    <source>
        <dbReference type="SAM" id="MobiDB-lite"/>
    </source>
</evidence>
<comment type="function">
    <text evidence="1">Catalyzes the transfer of an acyl group from acyl-phosphate (acyl-PO(4)) to glycerol-3-phosphate (G3P) to form lysophosphatidic acid (LPA). This enzyme utilizes acyl-phosphate as fatty acyl donor, but not acyl-CoA or acyl-ACP.</text>
</comment>
<comment type="catalytic activity">
    <reaction evidence="1">
        <text>an acyl phosphate + sn-glycerol 3-phosphate = a 1-acyl-sn-glycero-3-phosphate + phosphate</text>
        <dbReference type="Rhea" id="RHEA:34075"/>
        <dbReference type="ChEBI" id="CHEBI:43474"/>
        <dbReference type="ChEBI" id="CHEBI:57597"/>
        <dbReference type="ChEBI" id="CHEBI:57970"/>
        <dbReference type="ChEBI" id="CHEBI:59918"/>
        <dbReference type="EC" id="2.3.1.275"/>
    </reaction>
</comment>
<comment type="pathway">
    <text evidence="1">Lipid metabolism; phospholipid metabolism.</text>
</comment>
<comment type="subunit">
    <text evidence="1">Probably interacts with PlsX.</text>
</comment>
<comment type="subcellular location">
    <subcellularLocation>
        <location evidence="1">Cell inner membrane</location>
        <topology evidence="1">Multi-pass membrane protein</topology>
    </subcellularLocation>
</comment>
<comment type="similarity">
    <text evidence="1">Belongs to the PlsY family.</text>
</comment>
<feature type="chain" id="PRO_1000084387" description="Glycerol-3-phosphate acyltransferase">
    <location>
        <begin position="1"/>
        <end position="216"/>
    </location>
</feature>
<feature type="transmembrane region" description="Helical" evidence="1">
    <location>
        <begin position="5"/>
        <end position="25"/>
    </location>
</feature>
<feature type="transmembrane region" description="Helical" evidence="1">
    <location>
        <begin position="70"/>
        <end position="90"/>
    </location>
</feature>
<feature type="transmembrane region" description="Helical" evidence="1">
    <location>
        <begin position="118"/>
        <end position="138"/>
    </location>
</feature>
<feature type="transmembrane region" description="Helical" evidence="1">
    <location>
        <begin position="140"/>
        <end position="160"/>
    </location>
</feature>
<feature type="transmembrane region" description="Helical" evidence="1">
    <location>
        <begin position="164"/>
        <end position="184"/>
    </location>
</feature>
<feature type="region of interest" description="Disordered" evidence="2">
    <location>
        <begin position="192"/>
        <end position="216"/>
    </location>
</feature>
<feature type="compositionally biased region" description="Basic and acidic residues" evidence="2">
    <location>
        <begin position="192"/>
        <end position="201"/>
    </location>
</feature>
<feature type="compositionally biased region" description="Acidic residues" evidence="2">
    <location>
        <begin position="206"/>
        <end position="216"/>
    </location>
</feature>
<gene>
    <name evidence="1" type="primary">plsY</name>
    <name type="ordered locus">Mmar10_1715</name>
</gene>
<proteinExistence type="inferred from homology"/>
<organism>
    <name type="scientific">Maricaulis maris (strain MCS10)</name>
    <name type="common">Caulobacter maris</name>
    <dbReference type="NCBI Taxonomy" id="394221"/>
    <lineage>
        <taxon>Bacteria</taxon>
        <taxon>Pseudomonadati</taxon>
        <taxon>Pseudomonadota</taxon>
        <taxon>Alphaproteobacteria</taxon>
        <taxon>Maricaulales</taxon>
        <taxon>Maricaulaceae</taxon>
        <taxon>Maricaulis</taxon>
    </lineage>
</organism>
<sequence>MTSLLIALAAAAGGYLFGSIPFGLVLTRMAGLGDIRAIGSGNIGATNVLRTGRKDLAALTLILDAGKAGIAAAVFGYFLGTTAGLVAGAFAFAGHCFPVWLGFKGGKGVATFVGTMLVVFWPVGLTVIATWLAMAAIFRISSLAALAAALAAPFAALAWGRPDVAIMAGLLTVLIYWLHRANISRLLKGEEPRIGGKKSETSADVSDGDDPDTPAT</sequence>
<dbReference type="EC" id="2.3.1.275" evidence="1"/>
<dbReference type="EMBL" id="CP000449">
    <property type="protein sequence ID" value="ABI66007.1"/>
    <property type="molecule type" value="Genomic_DNA"/>
</dbReference>
<dbReference type="RefSeq" id="WP_011643653.1">
    <property type="nucleotide sequence ID" value="NC_008347.1"/>
</dbReference>
<dbReference type="SMR" id="Q0ANY0"/>
<dbReference type="STRING" id="394221.Mmar10_1715"/>
<dbReference type="KEGG" id="mmr:Mmar10_1715"/>
<dbReference type="eggNOG" id="COG0344">
    <property type="taxonomic scope" value="Bacteria"/>
</dbReference>
<dbReference type="HOGENOM" id="CLU_081254_1_0_5"/>
<dbReference type="OrthoDB" id="9777124at2"/>
<dbReference type="UniPathway" id="UPA00085"/>
<dbReference type="Proteomes" id="UP000001964">
    <property type="component" value="Chromosome"/>
</dbReference>
<dbReference type="GO" id="GO:0005886">
    <property type="term" value="C:plasma membrane"/>
    <property type="evidence" value="ECO:0007669"/>
    <property type="project" value="UniProtKB-SubCell"/>
</dbReference>
<dbReference type="GO" id="GO:0043772">
    <property type="term" value="F:acyl-phosphate glycerol-3-phosphate acyltransferase activity"/>
    <property type="evidence" value="ECO:0007669"/>
    <property type="project" value="UniProtKB-UniRule"/>
</dbReference>
<dbReference type="GO" id="GO:0008654">
    <property type="term" value="P:phospholipid biosynthetic process"/>
    <property type="evidence" value="ECO:0007669"/>
    <property type="project" value="UniProtKB-UniRule"/>
</dbReference>
<dbReference type="HAMAP" id="MF_01043">
    <property type="entry name" value="PlsY"/>
    <property type="match status" value="1"/>
</dbReference>
<dbReference type="InterPro" id="IPR003811">
    <property type="entry name" value="G3P_acylTferase_PlsY"/>
</dbReference>
<dbReference type="NCBIfam" id="TIGR00023">
    <property type="entry name" value="glycerol-3-phosphate 1-O-acyltransferase PlsY"/>
    <property type="match status" value="1"/>
</dbReference>
<dbReference type="PANTHER" id="PTHR30309:SF0">
    <property type="entry name" value="GLYCEROL-3-PHOSPHATE ACYLTRANSFERASE-RELATED"/>
    <property type="match status" value="1"/>
</dbReference>
<dbReference type="PANTHER" id="PTHR30309">
    <property type="entry name" value="INNER MEMBRANE PROTEIN YGIH"/>
    <property type="match status" value="1"/>
</dbReference>
<dbReference type="Pfam" id="PF02660">
    <property type="entry name" value="G3P_acyltransf"/>
    <property type="match status" value="1"/>
</dbReference>
<dbReference type="SMART" id="SM01207">
    <property type="entry name" value="G3P_acyltransf"/>
    <property type="match status" value="1"/>
</dbReference>
<reference key="1">
    <citation type="submission" date="2006-08" db="EMBL/GenBank/DDBJ databases">
        <title>Complete sequence of Maricaulis maris MCS10.</title>
        <authorList>
            <consortium name="US DOE Joint Genome Institute"/>
            <person name="Copeland A."/>
            <person name="Lucas S."/>
            <person name="Lapidus A."/>
            <person name="Barry K."/>
            <person name="Detter J.C."/>
            <person name="Glavina del Rio T."/>
            <person name="Hammon N."/>
            <person name="Israni S."/>
            <person name="Dalin E."/>
            <person name="Tice H."/>
            <person name="Pitluck S."/>
            <person name="Saunders E."/>
            <person name="Brettin T."/>
            <person name="Bruce D."/>
            <person name="Han C."/>
            <person name="Tapia R."/>
            <person name="Gilna P."/>
            <person name="Schmutz J."/>
            <person name="Larimer F."/>
            <person name="Land M."/>
            <person name="Hauser L."/>
            <person name="Kyrpides N."/>
            <person name="Mikhailova N."/>
            <person name="Viollier P."/>
            <person name="Stephens C."/>
            <person name="Richardson P."/>
        </authorList>
    </citation>
    <scope>NUCLEOTIDE SEQUENCE [LARGE SCALE GENOMIC DNA]</scope>
    <source>
        <strain>MCS10</strain>
    </source>
</reference>
<accession>Q0ANY0</accession>
<protein>
    <recommendedName>
        <fullName evidence="1">Glycerol-3-phosphate acyltransferase</fullName>
    </recommendedName>
    <alternativeName>
        <fullName evidence="1">Acyl-PO4 G3P acyltransferase</fullName>
    </alternativeName>
    <alternativeName>
        <fullName evidence="1">Acyl-phosphate--glycerol-3-phosphate acyltransferase</fullName>
    </alternativeName>
    <alternativeName>
        <fullName evidence="1">G3P acyltransferase</fullName>
        <shortName evidence="1">GPAT</shortName>
        <ecNumber evidence="1">2.3.1.275</ecNumber>
    </alternativeName>
    <alternativeName>
        <fullName evidence="1">Lysophosphatidic acid synthase</fullName>
        <shortName evidence="1">LPA synthase</shortName>
    </alternativeName>
</protein>
<keyword id="KW-0997">Cell inner membrane</keyword>
<keyword id="KW-1003">Cell membrane</keyword>
<keyword id="KW-0444">Lipid biosynthesis</keyword>
<keyword id="KW-0443">Lipid metabolism</keyword>
<keyword id="KW-0472">Membrane</keyword>
<keyword id="KW-0594">Phospholipid biosynthesis</keyword>
<keyword id="KW-1208">Phospholipid metabolism</keyword>
<keyword id="KW-1185">Reference proteome</keyword>
<keyword id="KW-0808">Transferase</keyword>
<keyword id="KW-0812">Transmembrane</keyword>
<keyword id="KW-1133">Transmembrane helix</keyword>